<organism>
    <name type="scientific">Heliothis virescens</name>
    <name type="common">Tobacco budworm moth</name>
    <dbReference type="NCBI Taxonomy" id="7102"/>
    <lineage>
        <taxon>Eukaryota</taxon>
        <taxon>Metazoa</taxon>
        <taxon>Ecdysozoa</taxon>
        <taxon>Arthropoda</taxon>
        <taxon>Hexapoda</taxon>
        <taxon>Insecta</taxon>
        <taxon>Pterygota</taxon>
        <taxon>Neoptera</taxon>
        <taxon>Endopterygota</taxon>
        <taxon>Lepidoptera</taxon>
        <taxon>Glossata</taxon>
        <taxon>Ditrysia</taxon>
        <taxon>Noctuoidea</taxon>
        <taxon>Noctuidae</taxon>
        <taxon>Heliothinae</taxon>
        <taxon>Heliothis</taxon>
    </lineage>
</organism>
<comment type="catalytic activity">
    <reaction>
        <text>D-glyceraldehyde 3-phosphate = dihydroxyacetone phosphate</text>
        <dbReference type="Rhea" id="RHEA:18585"/>
        <dbReference type="ChEBI" id="CHEBI:57642"/>
        <dbReference type="ChEBI" id="CHEBI:59776"/>
        <dbReference type="EC" id="5.3.1.1"/>
    </reaction>
</comment>
<comment type="pathway">
    <text>Carbohydrate biosynthesis; gluconeogenesis.</text>
</comment>
<comment type="pathway">
    <text>Carbohydrate degradation; glycolysis; D-glyceraldehyde 3-phosphate from glycerone phosphate: step 1/1.</text>
</comment>
<comment type="subunit">
    <text evidence="1">Homodimer.</text>
</comment>
<comment type="similarity">
    <text evidence="2">Belongs to the triosephosphate isomerase family.</text>
</comment>
<keyword id="KW-0312">Gluconeogenesis</keyword>
<keyword id="KW-0324">Glycolysis</keyword>
<keyword id="KW-0413">Isomerase</keyword>
<proteinExistence type="inferred from homology"/>
<name>TPIS_HELVI</name>
<sequence>MNGDKKQVTDIVETLKKGPLDPNVEVVIGVPAIYLAYVQSIVPGTISVAAQNCWKVAKGAFTGEISPAMIKDIGANWVILGHSERRTIFGEKDDLVAEKVAHALENGLKVIACIGETLEEREAGKTEEVVFRQTKALLPAIGNNWANVVLAYEPVWAIGTGKTASPQQAQDVHASLRNWLSSNASPDVAASVRIQYGGSVTAANAKELSAFPDID</sequence>
<protein>
    <recommendedName>
        <fullName>Triosephosphate isomerase</fullName>
        <shortName>TIM</shortName>
        <ecNumber>5.3.1.1</ecNumber>
    </recommendedName>
    <alternativeName>
        <fullName>Triose-phosphate isomerase</fullName>
    </alternativeName>
</protein>
<accession>P55275</accession>
<dbReference type="EC" id="5.3.1.1"/>
<dbReference type="EMBL" id="U23080">
    <property type="protein sequence ID" value="AAA79847.1"/>
    <property type="molecule type" value="Genomic_DNA"/>
</dbReference>
<dbReference type="SMR" id="P55275"/>
<dbReference type="UniPathway" id="UPA00109">
    <property type="reaction ID" value="UER00189"/>
</dbReference>
<dbReference type="UniPathway" id="UPA00138"/>
<dbReference type="GO" id="GO:0005829">
    <property type="term" value="C:cytosol"/>
    <property type="evidence" value="ECO:0007669"/>
    <property type="project" value="TreeGrafter"/>
</dbReference>
<dbReference type="GO" id="GO:0004807">
    <property type="term" value="F:triose-phosphate isomerase activity"/>
    <property type="evidence" value="ECO:0007669"/>
    <property type="project" value="UniProtKB-EC"/>
</dbReference>
<dbReference type="GO" id="GO:0006094">
    <property type="term" value="P:gluconeogenesis"/>
    <property type="evidence" value="ECO:0007669"/>
    <property type="project" value="UniProtKB-UniPathway"/>
</dbReference>
<dbReference type="GO" id="GO:0046166">
    <property type="term" value="P:glyceraldehyde-3-phosphate biosynthetic process"/>
    <property type="evidence" value="ECO:0007669"/>
    <property type="project" value="TreeGrafter"/>
</dbReference>
<dbReference type="GO" id="GO:0019563">
    <property type="term" value="P:glycerol catabolic process"/>
    <property type="evidence" value="ECO:0007669"/>
    <property type="project" value="TreeGrafter"/>
</dbReference>
<dbReference type="GO" id="GO:0006096">
    <property type="term" value="P:glycolytic process"/>
    <property type="evidence" value="ECO:0007669"/>
    <property type="project" value="UniProtKB-UniPathway"/>
</dbReference>
<dbReference type="CDD" id="cd00311">
    <property type="entry name" value="TIM"/>
    <property type="match status" value="1"/>
</dbReference>
<dbReference type="FunFam" id="3.20.20.70:FF:000016">
    <property type="entry name" value="Triosephosphate isomerase"/>
    <property type="match status" value="1"/>
</dbReference>
<dbReference type="Gene3D" id="3.20.20.70">
    <property type="entry name" value="Aldolase class I"/>
    <property type="match status" value="1"/>
</dbReference>
<dbReference type="HAMAP" id="MF_00147_B">
    <property type="entry name" value="TIM_B"/>
    <property type="match status" value="1"/>
</dbReference>
<dbReference type="InterPro" id="IPR013785">
    <property type="entry name" value="Aldolase_TIM"/>
</dbReference>
<dbReference type="InterPro" id="IPR035990">
    <property type="entry name" value="TIM_sf"/>
</dbReference>
<dbReference type="InterPro" id="IPR022896">
    <property type="entry name" value="TrioseP_Isoase_bac/euk"/>
</dbReference>
<dbReference type="InterPro" id="IPR000652">
    <property type="entry name" value="Triosephosphate_isomerase"/>
</dbReference>
<dbReference type="InterPro" id="IPR020861">
    <property type="entry name" value="Triosephosphate_isomerase_AS"/>
</dbReference>
<dbReference type="NCBIfam" id="TIGR00419">
    <property type="entry name" value="tim"/>
    <property type="match status" value="1"/>
</dbReference>
<dbReference type="PANTHER" id="PTHR21139">
    <property type="entry name" value="TRIOSEPHOSPHATE ISOMERASE"/>
    <property type="match status" value="1"/>
</dbReference>
<dbReference type="PANTHER" id="PTHR21139:SF2">
    <property type="entry name" value="TRIOSEPHOSPHATE ISOMERASE"/>
    <property type="match status" value="1"/>
</dbReference>
<dbReference type="Pfam" id="PF00121">
    <property type="entry name" value="TIM"/>
    <property type="match status" value="1"/>
</dbReference>
<dbReference type="SUPFAM" id="SSF51351">
    <property type="entry name" value="Triosephosphate isomerase (TIM)"/>
    <property type="match status" value="1"/>
</dbReference>
<dbReference type="PROSITE" id="PS00171">
    <property type="entry name" value="TIM_1"/>
    <property type="match status" value="1"/>
</dbReference>
<dbReference type="PROSITE" id="PS51440">
    <property type="entry name" value="TIM_2"/>
    <property type="match status" value="1"/>
</dbReference>
<feature type="chain" id="PRO_0000090134" description="Triosephosphate isomerase">
    <location>
        <begin position="1" status="less than"/>
        <end position="215" status="greater than"/>
    </location>
</feature>
<feature type="active site" description="Electrophile" evidence="1">
    <location>
        <position position="82"/>
    </location>
</feature>
<feature type="active site" description="Proton acceptor" evidence="1">
    <location>
        <position position="153"/>
    </location>
</feature>
<feature type="non-terminal residue">
    <location>
        <position position="1"/>
    </location>
</feature>
<feature type="non-terminal residue">
    <location>
        <position position="215"/>
    </location>
</feature>
<evidence type="ECO:0000250" key="1"/>
<evidence type="ECO:0000305" key="2"/>
<reference key="1">
    <citation type="journal article" date="1995" name="Proc. Natl. Acad. Sci. U.S.A.">
        <title>Seven newly discovered intron positions in the triose-phosphate isomerase gene: evidence for the introns-late theory.</title>
        <authorList>
            <person name="Logsdon J.M. Jr."/>
            <person name="Tyshenko M.G."/>
            <person name="Dixon C."/>
            <person name="D-Jafari J."/>
            <person name="Walker V.K."/>
            <person name="Palmer J.D."/>
        </authorList>
    </citation>
    <scope>NUCLEOTIDE SEQUENCE [GENOMIC DNA]</scope>
</reference>
<gene>
    <name type="primary">Tpi</name>
</gene>